<accession>Q7MZN3</accession>
<dbReference type="EMBL" id="BX571873">
    <property type="protein sequence ID" value="CAE16621.1"/>
    <property type="molecule type" value="Genomic_DNA"/>
</dbReference>
<dbReference type="RefSeq" id="WP_011148346.1">
    <property type="nucleotide sequence ID" value="NC_005126.1"/>
</dbReference>
<dbReference type="SMR" id="Q7MZN3"/>
<dbReference type="STRING" id="243265.plu4249"/>
<dbReference type="GeneID" id="48850459"/>
<dbReference type="KEGG" id="plu:plu4249"/>
<dbReference type="eggNOG" id="COG4108">
    <property type="taxonomic scope" value="Bacteria"/>
</dbReference>
<dbReference type="HOGENOM" id="CLU_002794_2_1_6"/>
<dbReference type="OrthoDB" id="9804431at2"/>
<dbReference type="Proteomes" id="UP000002514">
    <property type="component" value="Chromosome"/>
</dbReference>
<dbReference type="GO" id="GO:0005829">
    <property type="term" value="C:cytosol"/>
    <property type="evidence" value="ECO:0007669"/>
    <property type="project" value="TreeGrafter"/>
</dbReference>
<dbReference type="GO" id="GO:0005525">
    <property type="term" value="F:GTP binding"/>
    <property type="evidence" value="ECO:0007669"/>
    <property type="project" value="UniProtKB-UniRule"/>
</dbReference>
<dbReference type="GO" id="GO:0003924">
    <property type="term" value="F:GTPase activity"/>
    <property type="evidence" value="ECO:0007669"/>
    <property type="project" value="InterPro"/>
</dbReference>
<dbReference type="GO" id="GO:0097216">
    <property type="term" value="F:guanosine tetraphosphate binding"/>
    <property type="evidence" value="ECO:0007669"/>
    <property type="project" value="UniProtKB-ARBA"/>
</dbReference>
<dbReference type="GO" id="GO:0016150">
    <property type="term" value="F:translation release factor activity, codon nonspecific"/>
    <property type="evidence" value="ECO:0007669"/>
    <property type="project" value="TreeGrafter"/>
</dbReference>
<dbReference type="GO" id="GO:0016149">
    <property type="term" value="F:translation release factor activity, codon specific"/>
    <property type="evidence" value="ECO:0007669"/>
    <property type="project" value="UniProtKB-UniRule"/>
</dbReference>
<dbReference type="GO" id="GO:0006449">
    <property type="term" value="P:regulation of translational termination"/>
    <property type="evidence" value="ECO:0007669"/>
    <property type="project" value="UniProtKB-UniRule"/>
</dbReference>
<dbReference type="CDD" id="cd04169">
    <property type="entry name" value="RF3"/>
    <property type="match status" value="1"/>
</dbReference>
<dbReference type="CDD" id="cd03689">
    <property type="entry name" value="RF3_II"/>
    <property type="match status" value="1"/>
</dbReference>
<dbReference type="CDD" id="cd16259">
    <property type="entry name" value="RF3_III"/>
    <property type="match status" value="1"/>
</dbReference>
<dbReference type="FunFam" id="3.30.70.3280:FF:000001">
    <property type="entry name" value="Peptide chain release factor 3"/>
    <property type="match status" value="1"/>
</dbReference>
<dbReference type="FunFam" id="3.40.50.300:FF:000184">
    <property type="entry name" value="Peptide chain release factor 3"/>
    <property type="match status" value="1"/>
</dbReference>
<dbReference type="FunFam" id="3.40.50.300:FF:000253">
    <property type="entry name" value="Peptide chain release factor 3"/>
    <property type="match status" value="1"/>
</dbReference>
<dbReference type="Gene3D" id="3.40.50.300">
    <property type="entry name" value="P-loop containing nucleotide triphosphate hydrolases"/>
    <property type="match status" value="2"/>
</dbReference>
<dbReference type="Gene3D" id="3.30.70.3280">
    <property type="entry name" value="Peptide chain release factor 3, domain III"/>
    <property type="match status" value="1"/>
</dbReference>
<dbReference type="HAMAP" id="MF_00072">
    <property type="entry name" value="Rel_fac_3"/>
    <property type="match status" value="1"/>
</dbReference>
<dbReference type="InterPro" id="IPR053905">
    <property type="entry name" value="EF-G-like_DII"/>
</dbReference>
<dbReference type="InterPro" id="IPR035647">
    <property type="entry name" value="EFG_III/V"/>
</dbReference>
<dbReference type="InterPro" id="IPR031157">
    <property type="entry name" value="G_TR_CS"/>
</dbReference>
<dbReference type="InterPro" id="IPR027417">
    <property type="entry name" value="P-loop_NTPase"/>
</dbReference>
<dbReference type="InterPro" id="IPR004548">
    <property type="entry name" value="PrfC"/>
</dbReference>
<dbReference type="InterPro" id="IPR032090">
    <property type="entry name" value="RF3_C"/>
</dbReference>
<dbReference type="InterPro" id="IPR038467">
    <property type="entry name" value="RF3_dom_3_sf"/>
</dbReference>
<dbReference type="InterPro" id="IPR041732">
    <property type="entry name" value="RF3_GTP-bd"/>
</dbReference>
<dbReference type="InterPro" id="IPR005225">
    <property type="entry name" value="Small_GTP-bd"/>
</dbReference>
<dbReference type="InterPro" id="IPR000795">
    <property type="entry name" value="T_Tr_GTP-bd_dom"/>
</dbReference>
<dbReference type="InterPro" id="IPR009000">
    <property type="entry name" value="Transl_B-barrel_sf"/>
</dbReference>
<dbReference type="NCBIfam" id="TIGR00503">
    <property type="entry name" value="prfC"/>
    <property type="match status" value="1"/>
</dbReference>
<dbReference type="NCBIfam" id="NF001964">
    <property type="entry name" value="PRK00741.1"/>
    <property type="match status" value="1"/>
</dbReference>
<dbReference type="NCBIfam" id="TIGR00231">
    <property type="entry name" value="small_GTP"/>
    <property type="match status" value="1"/>
</dbReference>
<dbReference type="PANTHER" id="PTHR43556">
    <property type="entry name" value="PEPTIDE CHAIN RELEASE FACTOR RF3"/>
    <property type="match status" value="1"/>
</dbReference>
<dbReference type="PANTHER" id="PTHR43556:SF2">
    <property type="entry name" value="PEPTIDE CHAIN RELEASE FACTOR RF3"/>
    <property type="match status" value="1"/>
</dbReference>
<dbReference type="Pfam" id="PF22042">
    <property type="entry name" value="EF-G_D2"/>
    <property type="match status" value="1"/>
</dbReference>
<dbReference type="Pfam" id="PF00009">
    <property type="entry name" value="GTP_EFTU"/>
    <property type="match status" value="1"/>
</dbReference>
<dbReference type="Pfam" id="PF16658">
    <property type="entry name" value="RF3_C"/>
    <property type="match status" value="1"/>
</dbReference>
<dbReference type="PRINTS" id="PR00315">
    <property type="entry name" value="ELONGATNFCT"/>
</dbReference>
<dbReference type="SUPFAM" id="SSF54980">
    <property type="entry name" value="EF-G C-terminal domain-like"/>
    <property type="match status" value="1"/>
</dbReference>
<dbReference type="SUPFAM" id="SSF52540">
    <property type="entry name" value="P-loop containing nucleoside triphosphate hydrolases"/>
    <property type="match status" value="1"/>
</dbReference>
<dbReference type="SUPFAM" id="SSF50447">
    <property type="entry name" value="Translation proteins"/>
    <property type="match status" value="1"/>
</dbReference>
<dbReference type="PROSITE" id="PS00301">
    <property type="entry name" value="G_TR_1"/>
    <property type="match status" value="1"/>
</dbReference>
<dbReference type="PROSITE" id="PS51722">
    <property type="entry name" value="G_TR_2"/>
    <property type="match status" value="1"/>
</dbReference>
<organism>
    <name type="scientific">Photorhabdus laumondii subsp. laumondii (strain DSM 15139 / CIP 105565 / TT01)</name>
    <name type="common">Photorhabdus luminescens subsp. laumondii</name>
    <dbReference type="NCBI Taxonomy" id="243265"/>
    <lineage>
        <taxon>Bacteria</taxon>
        <taxon>Pseudomonadati</taxon>
        <taxon>Pseudomonadota</taxon>
        <taxon>Gammaproteobacteria</taxon>
        <taxon>Enterobacterales</taxon>
        <taxon>Morganellaceae</taxon>
        <taxon>Photorhabdus</taxon>
    </lineage>
</organism>
<gene>
    <name evidence="1" type="primary">prfC</name>
    <name type="ordered locus">plu4249</name>
</gene>
<name>RF3_PHOLL</name>
<feature type="chain" id="PRO_0000210954" description="Peptide chain release factor 3">
    <location>
        <begin position="1"/>
        <end position="529"/>
    </location>
</feature>
<feature type="domain" description="tr-type G">
    <location>
        <begin position="11"/>
        <end position="280"/>
    </location>
</feature>
<feature type="binding site" evidence="1">
    <location>
        <begin position="20"/>
        <end position="27"/>
    </location>
    <ligand>
        <name>GTP</name>
        <dbReference type="ChEBI" id="CHEBI:37565"/>
    </ligand>
</feature>
<feature type="binding site" evidence="1">
    <location>
        <begin position="88"/>
        <end position="92"/>
    </location>
    <ligand>
        <name>GTP</name>
        <dbReference type="ChEBI" id="CHEBI:37565"/>
    </ligand>
</feature>
<feature type="binding site" evidence="1">
    <location>
        <begin position="142"/>
        <end position="145"/>
    </location>
    <ligand>
        <name>GTP</name>
        <dbReference type="ChEBI" id="CHEBI:37565"/>
    </ligand>
</feature>
<evidence type="ECO:0000255" key="1">
    <source>
        <dbReference type="HAMAP-Rule" id="MF_00072"/>
    </source>
</evidence>
<protein>
    <recommendedName>
        <fullName evidence="1">Peptide chain release factor 3</fullName>
        <shortName evidence="1">RF-3</shortName>
    </recommendedName>
</protein>
<sequence length="529" mass="59861">MSNSPFQQEVAKRRTFAIISHPDAGKTTITEKVLLFGQAIQKAGTVKGRGSNQHAKSDWMEMEKQRGISITTSVMQFPYQDCLVNLLDTPGHEDFSEDTYRTLTAVDCCLMVIDAAKGVEERTRKLMEVTRLRDTPILTFMNKLDRDIRDPMELMDEVENELNIACCPITWPIGCGKSFKGVYHLYLDETYLYQTGKGHTIQEVRAIKGLNNPELDAAIGEDLAEQLRQELELVQGASHEFDHQAFLQGELTPVFFGTALGNFGVNHMLDGLVKWAPAPMPRQTDVREVSAQEDKFTGFIFKIQANMDPKHRDRVAFLRVVSGQYEKGMKLHQVRIKKDVVIADALTFMAGDRSHVDHAYPGDIIGLHNHGTIQIGDTFTQGEDLKFTGIPNFAPELFRRIRLRDPLKQKQLLKGLVQLSEEGAVQVFRPLANNDLIVGAVGILQFDVVVARLKSEYNVEALYEPVNVSTARWVECHDAKKLEEFKRKSEQNLALDGGDNLTYIAPTMVNLNLTRERYPDINFRKTREH</sequence>
<comment type="function">
    <text evidence="1">Increases the formation of ribosomal termination complexes and stimulates activities of RF-1 and RF-2. It binds guanine nucleotides and has strong preference for UGA stop codons. It may interact directly with the ribosome. The stimulation of RF-1 and RF-2 is significantly reduced by GTP and GDP, but not by GMP.</text>
</comment>
<comment type="subcellular location">
    <subcellularLocation>
        <location evidence="1">Cytoplasm</location>
    </subcellularLocation>
</comment>
<comment type="similarity">
    <text evidence="1">Belongs to the TRAFAC class translation factor GTPase superfamily. Classic translation factor GTPase family. PrfC subfamily.</text>
</comment>
<reference key="1">
    <citation type="journal article" date="2003" name="Nat. Biotechnol.">
        <title>The genome sequence of the entomopathogenic bacterium Photorhabdus luminescens.</title>
        <authorList>
            <person name="Duchaud E."/>
            <person name="Rusniok C."/>
            <person name="Frangeul L."/>
            <person name="Buchrieser C."/>
            <person name="Givaudan A."/>
            <person name="Taourit S."/>
            <person name="Bocs S."/>
            <person name="Boursaux-Eude C."/>
            <person name="Chandler M."/>
            <person name="Charles J.-F."/>
            <person name="Dassa E."/>
            <person name="Derose R."/>
            <person name="Derzelle S."/>
            <person name="Freyssinet G."/>
            <person name="Gaudriault S."/>
            <person name="Medigue C."/>
            <person name="Lanois A."/>
            <person name="Powell K."/>
            <person name="Siguier P."/>
            <person name="Vincent R."/>
            <person name="Wingate V."/>
            <person name="Zouine M."/>
            <person name="Glaser P."/>
            <person name="Boemare N."/>
            <person name="Danchin A."/>
            <person name="Kunst F."/>
        </authorList>
    </citation>
    <scope>NUCLEOTIDE SEQUENCE [LARGE SCALE GENOMIC DNA]</scope>
    <source>
        <strain>DSM 15139 / CIP 105565 / TT01</strain>
    </source>
</reference>
<keyword id="KW-0963">Cytoplasm</keyword>
<keyword id="KW-0342">GTP-binding</keyword>
<keyword id="KW-0547">Nucleotide-binding</keyword>
<keyword id="KW-0648">Protein biosynthesis</keyword>
<keyword id="KW-1185">Reference proteome</keyword>
<proteinExistence type="inferred from homology"/>